<comment type="function">
    <text evidence="2">Component of the ubiquinol-cytochrome c reductase complex (complex III or cytochrome b-c1 complex) that is part of the mitochondrial respiratory chain. The b-c1 complex mediates electron transfer from ubiquinol to cytochrome c. Contributes to the generation of a proton gradient across the mitochondrial membrane that is then used for ATP synthesis.</text>
</comment>
<comment type="cofactor">
    <cofactor evidence="2">
        <name>heme b</name>
        <dbReference type="ChEBI" id="CHEBI:60344"/>
    </cofactor>
    <text evidence="2">Binds 2 heme b groups non-covalently.</text>
</comment>
<comment type="subunit">
    <text evidence="2">The cytochrome bc1 complex contains 11 subunits: 3 respiratory subunits (MT-CYB, CYC1 and UQCRFS1), 2 core proteins (UQCRC1 and UQCRC2) and 6 low-molecular weight proteins (UQCRH/QCR6, UQCRB/QCR7, UQCRQ/QCR8, UQCR10/QCR9, UQCR11/QCR10 and a cleavage product of UQCRFS1). This cytochrome bc1 complex then forms a dimer.</text>
</comment>
<comment type="subcellular location">
    <subcellularLocation>
        <location evidence="2">Mitochondrion inner membrane</location>
        <topology evidence="2">Multi-pass membrane protein</topology>
    </subcellularLocation>
</comment>
<comment type="miscellaneous">
    <text evidence="1">Heme 1 (or BL or b562) is low-potential and absorbs at about 562 nm, and heme 2 (or BH or b566) is high-potential and absorbs at about 566 nm.</text>
</comment>
<comment type="similarity">
    <text evidence="3 4">Belongs to the cytochrome b family.</text>
</comment>
<comment type="caution">
    <text evidence="2">The full-length protein contains only eight transmembrane helices, not nine as predicted by bioinformatics tools.</text>
</comment>
<evidence type="ECO:0000250" key="1"/>
<evidence type="ECO:0000250" key="2">
    <source>
        <dbReference type="UniProtKB" id="P00157"/>
    </source>
</evidence>
<evidence type="ECO:0000255" key="3">
    <source>
        <dbReference type="PROSITE-ProRule" id="PRU00967"/>
    </source>
</evidence>
<evidence type="ECO:0000255" key="4">
    <source>
        <dbReference type="PROSITE-ProRule" id="PRU00968"/>
    </source>
</evidence>
<geneLocation type="mitochondrion"/>
<accession>Q9ZZT5</accession>
<reference key="1">
    <citation type="journal article" date="1999" name="J. Mammal. Evol.">
        <title>Systematic position of the African dormouse Graphiurus (Rodentia, Gliridae) assessed from cytochrome b and 12s rRNA mitochondrial genes.</title>
        <authorList>
            <person name="Bentz S."/>
            <person name="Montgelard C."/>
        </authorList>
    </citation>
    <scope>NUCLEOTIDE SEQUENCE [GENOMIC DNA]</scope>
    <source>
        <strain>Isolate E-4976</strain>
    </source>
</reference>
<proteinExistence type="inferred from homology"/>
<organism>
    <name type="scientific">Graphiurus murinus</name>
    <name type="common">African pygmy dormouse</name>
    <name type="synonym">African woodland dormouse</name>
    <dbReference type="NCBI Taxonomy" id="51346"/>
    <lineage>
        <taxon>Eukaryota</taxon>
        <taxon>Metazoa</taxon>
        <taxon>Chordata</taxon>
        <taxon>Craniata</taxon>
        <taxon>Vertebrata</taxon>
        <taxon>Euteleostomi</taxon>
        <taxon>Mammalia</taxon>
        <taxon>Eutheria</taxon>
        <taxon>Euarchontoglires</taxon>
        <taxon>Glires</taxon>
        <taxon>Rodentia</taxon>
        <taxon>Sciuromorpha</taxon>
        <taxon>Gliridae</taxon>
        <taxon>Graphiurinae</taxon>
        <taxon>Graphiurus</taxon>
    </lineage>
</organism>
<keyword id="KW-0249">Electron transport</keyword>
<keyword id="KW-0349">Heme</keyword>
<keyword id="KW-0408">Iron</keyword>
<keyword id="KW-0472">Membrane</keyword>
<keyword id="KW-0479">Metal-binding</keyword>
<keyword id="KW-0496">Mitochondrion</keyword>
<keyword id="KW-0999">Mitochondrion inner membrane</keyword>
<keyword id="KW-0679">Respiratory chain</keyword>
<keyword id="KW-0812">Transmembrane</keyword>
<keyword id="KW-1133">Transmembrane helix</keyword>
<keyword id="KW-0813">Transport</keyword>
<keyword id="KW-0830">Ubiquinone</keyword>
<feature type="chain" id="PRO_0000227672" description="Cytochrome b">
    <location>
        <begin position="1"/>
        <end position="379"/>
    </location>
</feature>
<feature type="transmembrane region" description="Helical" evidence="2">
    <location>
        <begin position="33"/>
        <end position="53"/>
    </location>
</feature>
<feature type="transmembrane region" description="Helical" evidence="2">
    <location>
        <begin position="77"/>
        <end position="98"/>
    </location>
</feature>
<feature type="transmembrane region" description="Helical" evidence="2">
    <location>
        <begin position="113"/>
        <end position="133"/>
    </location>
</feature>
<feature type="transmembrane region" description="Helical" evidence="2">
    <location>
        <begin position="178"/>
        <end position="198"/>
    </location>
</feature>
<feature type="transmembrane region" description="Helical" evidence="2">
    <location>
        <begin position="226"/>
        <end position="246"/>
    </location>
</feature>
<feature type="transmembrane region" description="Helical" evidence="2">
    <location>
        <begin position="288"/>
        <end position="308"/>
    </location>
</feature>
<feature type="transmembrane region" description="Helical" evidence="2">
    <location>
        <begin position="320"/>
        <end position="340"/>
    </location>
</feature>
<feature type="transmembrane region" description="Helical" evidence="2">
    <location>
        <begin position="347"/>
        <end position="367"/>
    </location>
</feature>
<feature type="binding site" description="axial binding residue" evidence="2">
    <location>
        <position position="83"/>
    </location>
    <ligand>
        <name>heme b</name>
        <dbReference type="ChEBI" id="CHEBI:60344"/>
        <label>b562</label>
    </ligand>
    <ligandPart>
        <name>Fe</name>
        <dbReference type="ChEBI" id="CHEBI:18248"/>
    </ligandPart>
</feature>
<feature type="binding site" description="axial binding residue" evidence="2">
    <location>
        <position position="97"/>
    </location>
    <ligand>
        <name>heme b</name>
        <dbReference type="ChEBI" id="CHEBI:60344"/>
        <label>b566</label>
    </ligand>
    <ligandPart>
        <name>Fe</name>
        <dbReference type="ChEBI" id="CHEBI:18248"/>
    </ligandPart>
</feature>
<feature type="binding site" description="axial binding residue" evidence="2">
    <location>
        <position position="182"/>
    </location>
    <ligand>
        <name>heme b</name>
        <dbReference type="ChEBI" id="CHEBI:60344"/>
        <label>b562</label>
    </ligand>
    <ligandPart>
        <name>Fe</name>
        <dbReference type="ChEBI" id="CHEBI:18248"/>
    </ligandPart>
</feature>
<feature type="binding site" description="axial binding residue" evidence="2">
    <location>
        <position position="196"/>
    </location>
    <ligand>
        <name>heme b</name>
        <dbReference type="ChEBI" id="CHEBI:60344"/>
        <label>b566</label>
    </ligand>
    <ligandPart>
        <name>Fe</name>
        <dbReference type="ChEBI" id="CHEBI:18248"/>
    </ligandPart>
</feature>
<feature type="binding site" evidence="2">
    <location>
        <position position="201"/>
    </location>
    <ligand>
        <name>a ubiquinone</name>
        <dbReference type="ChEBI" id="CHEBI:16389"/>
    </ligand>
</feature>
<sequence length="379" mass="42785">MTNIRKSHPLIKILNHSFIDLPAPSNISAWWNFGSLLGACLGIQILTGLFLAMHYTADTATAFSSVTHICRDVNYGWLIRYMHANGASMFFICLFLHVGRGLYYGSYMYIETWNIGIILLFTIMATAFMGYVLPWGQMSFWGATVITNLLSAIPYIGTTLVEWIWGGFSVDKATLTRFFAFHFILPFIIAALVMVHLLFLHETGSSNPSGINSDADKIPFHPYYTIKDILGLLLLIFLLMSLVLFSPDLLGDPDNYTPANPLSTPPHIKPEWYFLFAYAILRSIPNKLGGVLALILSILILAIFPLLQLSKQRSMMFRPLSQCLFWILTADLLTLTWIGGQPVEHPFIIIGQLASILYFSIILIFLPMFSLLENKLLKW</sequence>
<protein>
    <recommendedName>
        <fullName>Cytochrome b</fullName>
    </recommendedName>
    <alternativeName>
        <fullName>Complex III subunit 3</fullName>
    </alternativeName>
    <alternativeName>
        <fullName>Complex III subunit III</fullName>
    </alternativeName>
    <alternativeName>
        <fullName>Cytochrome b-c1 complex subunit 3</fullName>
    </alternativeName>
    <alternativeName>
        <fullName>Ubiquinol-cytochrome-c reductase complex cytochrome b subunit</fullName>
    </alternativeName>
</protein>
<name>CYB_GRAMU</name>
<dbReference type="EMBL" id="AJ225115">
    <property type="protein sequence ID" value="CAA12402.1"/>
    <property type="molecule type" value="Genomic_DNA"/>
</dbReference>
<dbReference type="SMR" id="Q9ZZT5"/>
<dbReference type="GO" id="GO:0005743">
    <property type="term" value="C:mitochondrial inner membrane"/>
    <property type="evidence" value="ECO:0007669"/>
    <property type="project" value="UniProtKB-SubCell"/>
</dbReference>
<dbReference type="GO" id="GO:0045275">
    <property type="term" value="C:respiratory chain complex III"/>
    <property type="evidence" value="ECO:0007669"/>
    <property type="project" value="InterPro"/>
</dbReference>
<dbReference type="GO" id="GO:0046872">
    <property type="term" value="F:metal ion binding"/>
    <property type="evidence" value="ECO:0007669"/>
    <property type="project" value="UniProtKB-KW"/>
</dbReference>
<dbReference type="GO" id="GO:0008121">
    <property type="term" value="F:ubiquinol-cytochrome-c reductase activity"/>
    <property type="evidence" value="ECO:0007669"/>
    <property type="project" value="InterPro"/>
</dbReference>
<dbReference type="GO" id="GO:0006122">
    <property type="term" value="P:mitochondrial electron transport, ubiquinol to cytochrome c"/>
    <property type="evidence" value="ECO:0007669"/>
    <property type="project" value="TreeGrafter"/>
</dbReference>
<dbReference type="CDD" id="cd00290">
    <property type="entry name" value="cytochrome_b_C"/>
    <property type="match status" value="1"/>
</dbReference>
<dbReference type="CDD" id="cd00284">
    <property type="entry name" value="Cytochrome_b_N"/>
    <property type="match status" value="1"/>
</dbReference>
<dbReference type="FunFam" id="1.20.810.10:FF:000002">
    <property type="entry name" value="Cytochrome b"/>
    <property type="match status" value="1"/>
</dbReference>
<dbReference type="Gene3D" id="1.20.810.10">
    <property type="entry name" value="Cytochrome Bc1 Complex, Chain C"/>
    <property type="match status" value="1"/>
</dbReference>
<dbReference type="InterPro" id="IPR005798">
    <property type="entry name" value="Cyt_b/b6_C"/>
</dbReference>
<dbReference type="InterPro" id="IPR036150">
    <property type="entry name" value="Cyt_b/b6_C_sf"/>
</dbReference>
<dbReference type="InterPro" id="IPR005797">
    <property type="entry name" value="Cyt_b/b6_N"/>
</dbReference>
<dbReference type="InterPro" id="IPR027387">
    <property type="entry name" value="Cytb/b6-like_sf"/>
</dbReference>
<dbReference type="InterPro" id="IPR030689">
    <property type="entry name" value="Cytochrome_b"/>
</dbReference>
<dbReference type="InterPro" id="IPR048260">
    <property type="entry name" value="Cytochrome_b_C_euk/bac"/>
</dbReference>
<dbReference type="InterPro" id="IPR048259">
    <property type="entry name" value="Cytochrome_b_N_euk/bac"/>
</dbReference>
<dbReference type="InterPro" id="IPR016174">
    <property type="entry name" value="Di-haem_cyt_TM"/>
</dbReference>
<dbReference type="PANTHER" id="PTHR19271">
    <property type="entry name" value="CYTOCHROME B"/>
    <property type="match status" value="1"/>
</dbReference>
<dbReference type="PANTHER" id="PTHR19271:SF16">
    <property type="entry name" value="CYTOCHROME B"/>
    <property type="match status" value="1"/>
</dbReference>
<dbReference type="Pfam" id="PF00032">
    <property type="entry name" value="Cytochrom_B_C"/>
    <property type="match status" value="1"/>
</dbReference>
<dbReference type="Pfam" id="PF00033">
    <property type="entry name" value="Cytochrome_B"/>
    <property type="match status" value="1"/>
</dbReference>
<dbReference type="PIRSF" id="PIRSF038885">
    <property type="entry name" value="COB"/>
    <property type="match status" value="1"/>
</dbReference>
<dbReference type="SUPFAM" id="SSF81648">
    <property type="entry name" value="a domain/subunit of cytochrome bc1 complex (Ubiquinol-cytochrome c reductase)"/>
    <property type="match status" value="1"/>
</dbReference>
<dbReference type="SUPFAM" id="SSF81342">
    <property type="entry name" value="Transmembrane di-heme cytochromes"/>
    <property type="match status" value="1"/>
</dbReference>
<dbReference type="PROSITE" id="PS51003">
    <property type="entry name" value="CYTB_CTER"/>
    <property type="match status" value="1"/>
</dbReference>
<dbReference type="PROSITE" id="PS51002">
    <property type="entry name" value="CYTB_NTER"/>
    <property type="match status" value="1"/>
</dbReference>
<gene>
    <name type="primary">MT-CYB</name>
    <name type="synonym">COB</name>
    <name type="synonym">CYTB</name>
    <name type="synonym">MTCYB</name>
</gene>